<dbReference type="EC" id="2.7.4.25" evidence="1"/>
<dbReference type="EMBL" id="BA000028">
    <property type="protein sequence ID" value="BAC13758.1"/>
    <property type="molecule type" value="Genomic_DNA"/>
</dbReference>
<dbReference type="RefSeq" id="WP_011066200.1">
    <property type="nucleotide sequence ID" value="NC_004193.1"/>
</dbReference>
<dbReference type="SMR" id="Q8CXF5"/>
<dbReference type="STRING" id="221109.gene:10734042"/>
<dbReference type="KEGG" id="oih:OB1802"/>
<dbReference type="eggNOG" id="COG0283">
    <property type="taxonomic scope" value="Bacteria"/>
</dbReference>
<dbReference type="HOGENOM" id="CLU_079959_0_2_9"/>
<dbReference type="OrthoDB" id="9807434at2"/>
<dbReference type="PhylomeDB" id="Q8CXF5"/>
<dbReference type="Proteomes" id="UP000000822">
    <property type="component" value="Chromosome"/>
</dbReference>
<dbReference type="GO" id="GO:0005829">
    <property type="term" value="C:cytosol"/>
    <property type="evidence" value="ECO:0007669"/>
    <property type="project" value="TreeGrafter"/>
</dbReference>
<dbReference type="GO" id="GO:0005524">
    <property type="term" value="F:ATP binding"/>
    <property type="evidence" value="ECO:0007669"/>
    <property type="project" value="UniProtKB-UniRule"/>
</dbReference>
<dbReference type="GO" id="GO:0036430">
    <property type="term" value="F:CMP kinase activity"/>
    <property type="evidence" value="ECO:0007669"/>
    <property type="project" value="RHEA"/>
</dbReference>
<dbReference type="GO" id="GO:0036431">
    <property type="term" value="F:dCMP kinase activity"/>
    <property type="evidence" value="ECO:0007669"/>
    <property type="project" value="RHEA"/>
</dbReference>
<dbReference type="GO" id="GO:0015949">
    <property type="term" value="P:nucleobase-containing small molecule interconversion"/>
    <property type="evidence" value="ECO:0007669"/>
    <property type="project" value="TreeGrafter"/>
</dbReference>
<dbReference type="GO" id="GO:0006220">
    <property type="term" value="P:pyrimidine nucleotide metabolic process"/>
    <property type="evidence" value="ECO:0007669"/>
    <property type="project" value="UniProtKB-UniRule"/>
</dbReference>
<dbReference type="CDD" id="cd02020">
    <property type="entry name" value="CMPK"/>
    <property type="match status" value="1"/>
</dbReference>
<dbReference type="FunFam" id="3.40.50.300:FF:000484">
    <property type="entry name" value="Cytidylate kinase"/>
    <property type="match status" value="1"/>
</dbReference>
<dbReference type="Gene3D" id="3.40.50.300">
    <property type="entry name" value="P-loop containing nucleotide triphosphate hydrolases"/>
    <property type="match status" value="1"/>
</dbReference>
<dbReference type="HAMAP" id="MF_00238">
    <property type="entry name" value="Cytidyl_kinase_type1"/>
    <property type="match status" value="1"/>
</dbReference>
<dbReference type="InterPro" id="IPR003136">
    <property type="entry name" value="Cytidylate_kin"/>
</dbReference>
<dbReference type="InterPro" id="IPR011994">
    <property type="entry name" value="Cytidylate_kinase_dom"/>
</dbReference>
<dbReference type="InterPro" id="IPR027417">
    <property type="entry name" value="P-loop_NTPase"/>
</dbReference>
<dbReference type="NCBIfam" id="TIGR00017">
    <property type="entry name" value="cmk"/>
    <property type="match status" value="1"/>
</dbReference>
<dbReference type="PANTHER" id="PTHR21299:SF2">
    <property type="entry name" value="CYTIDYLATE KINASE"/>
    <property type="match status" value="1"/>
</dbReference>
<dbReference type="PANTHER" id="PTHR21299">
    <property type="entry name" value="CYTIDYLATE KINASE/PANTOATE-BETA-ALANINE LIGASE"/>
    <property type="match status" value="1"/>
</dbReference>
<dbReference type="Pfam" id="PF02224">
    <property type="entry name" value="Cytidylate_kin"/>
    <property type="match status" value="1"/>
</dbReference>
<dbReference type="SUPFAM" id="SSF52540">
    <property type="entry name" value="P-loop containing nucleoside triphosphate hydrolases"/>
    <property type="match status" value="1"/>
</dbReference>
<organism>
    <name type="scientific">Oceanobacillus iheyensis (strain DSM 14371 / CIP 107618 / JCM 11309 / KCTC 3954 / HTE831)</name>
    <dbReference type="NCBI Taxonomy" id="221109"/>
    <lineage>
        <taxon>Bacteria</taxon>
        <taxon>Bacillati</taxon>
        <taxon>Bacillota</taxon>
        <taxon>Bacilli</taxon>
        <taxon>Bacillales</taxon>
        <taxon>Bacillaceae</taxon>
        <taxon>Oceanobacillus</taxon>
    </lineage>
</organism>
<protein>
    <recommendedName>
        <fullName evidence="1">Cytidylate kinase</fullName>
        <shortName evidence="1">CK</shortName>
        <ecNumber evidence="1">2.7.4.25</ecNumber>
    </recommendedName>
    <alternativeName>
        <fullName evidence="1">Cytidine monophosphate kinase</fullName>
        <shortName evidence="1">CMP kinase</shortName>
    </alternativeName>
</protein>
<sequence>MEQRITVAIDGPAAAGKSTVAKMIANQLGFIYVDTGAMYRALTYQALQEGIDPKNEDSVLTILMNSNIELRQAENGQRVFVNNKDVSEEIRYPDVTSKVSFVAEHPSIRKEMVSRQQKLANNRSVVMDGRDIGTHVLPDAEVKIFLIASVEERAKRRHEENIKKGIPSDIKLLKKEISDRDEIDSNREVSPLIKAEDAIEVDTTSLSIAEVKDQILNEIFKYNTQNNKGV</sequence>
<gene>
    <name evidence="1" type="primary">cmk</name>
    <name type="ordered locus">OB1802</name>
</gene>
<name>KCY_OCEIH</name>
<evidence type="ECO:0000255" key="1">
    <source>
        <dbReference type="HAMAP-Rule" id="MF_00238"/>
    </source>
</evidence>
<feature type="chain" id="PRO_0000131948" description="Cytidylate kinase">
    <location>
        <begin position="1"/>
        <end position="230"/>
    </location>
</feature>
<feature type="binding site" evidence="1">
    <location>
        <begin position="11"/>
        <end position="19"/>
    </location>
    <ligand>
        <name>ATP</name>
        <dbReference type="ChEBI" id="CHEBI:30616"/>
    </ligand>
</feature>
<proteinExistence type="inferred from homology"/>
<comment type="catalytic activity">
    <reaction evidence="1">
        <text>CMP + ATP = CDP + ADP</text>
        <dbReference type="Rhea" id="RHEA:11600"/>
        <dbReference type="ChEBI" id="CHEBI:30616"/>
        <dbReference type="ChEBI" id="CHEBI:58069"/>
        <dbReference type="ChEBI" id="CHEBI:60377"/>
        <dbReference type="ChEBI" id="CHEBI:456216"/>
        <dbReference type="EC" id="2.7.4.25"/>
    </reaction>
</comment>
<comment type="catalytic activity">
    <reaction evidence="1">
        <text>dCMP + ATP = dCDP + ADP</text>
        <dbReference type="Rhea" id="RHEA:25094"/>
        <dbReference type="ChEBI" id="CHEBI:30616"/>
        <dbReference type="ChEBI" id="CHEBI:57566"/>
        <dbReference type="ChEBI" id="CHEBI:58593"/>
        <dbReference type="ChEBI" id="CHEBI:456216"/>
        <dbReference type="EC" id="2.7.4.25"/>
    </reaction>
</comment>
<comment type="subcellular location">
    <subcellularLocation>
        <location evidence="1">Cytoplasm</location>
    </subcellularLocation>
</comment>
<comment type="similarity">
    <text evidence="1">Belongs to the cytidylate kinase family. Type 1 subfamily.</text>
</comment>
<keyword id="KW-0067">ATP-binding</keyword>
<keyword id="KW-0963">Cytoplasm</keyword>
<keyword id="KW-0418">Kinase</keyword>
<keyword id="KW-0547">Nucleotide-binding</keyword>
<keyword id="KW-1185">Reference proteome</keyword>
<keyword id="KW-0808">Transferase</keyword>
<accession>Q8CXF5</accession>
<reference key="1">
    <citation type="journal article" date="2002" name="Nucleic Acids Res.">
        <title>Genome sequence of Oceanobacillus iheyensis isolated from the Iheya Ridge and its unexpected adaptive capabilities to extreme environments.</title>
        <authorList>
            <person name="Takami H."/>
            <person name="Takaki Y."/>
            <person name="Uchiyama I."/>
        </authorList>
    </citation>
    <scope>NUCLEOTIDE SEQUENCE [LARGE SCALE GENOMIC DNA]</scope>
    <source>
        <strain>DSM 14371 / CIP 107618 / JCM 11309 / KCTC 3954 / HTE831</strain>
    </source>
</reference>